<evidence type="ECO:0000255" key="1">
    <source>
        <dbReference type="HAMAP-Rule" id="MF_00374"/>
    </source>
</evidence>
<evidence type="ECO:0000305" key="2"/>
<proteinExistence type="inferred from homology"/>
<accession>C0ZW33</accession>
<name>RL29_RHOE4</name>
<feature type="chain" id="PRO_1000205635" description="Large ribosomal subunit protein uL29">
    <location>
        <begin position="1"/>
        <end position="78"/>
    </location>
</feature>
<reference key="1">
    <citation type="submission" date="2005-03" db="EMBL/GenBank/DDBJ databases">
        <title>Comparison of the complete genome sequences of Rhodococcus erythropolis PR4 and Rhodococcus opacus B4.</title>
        <authorList>
            <person name="Takarada H."/>
            <person name="Sekine M."/>
            <person name="Hosoyama A."/>
            <person name="Yamada R."/>
            <person name="Fujisawa T."/>
            <person name="Omata S."/>
            <person name="Shimizu A."/>
            <person name="Tsukatani N."/>
            <person name="Tanikawa S."/>
            <person name="Fujita N."/>
            <person name="Harayama S."/>
        </authorList>
    </citation>
    <scope>NUCLEOTIDE SEQUENCE [LARGE SCALE GENOMIC DNA]</scope>
    <source>
        <strain>PR4 / NBRC 100887</strain>
    </source>
</reference>
<organism>
    <name type="scientific">Rhodococcus erythropolis (strain PR4 / NBRC 100887)</name>
    <dbReference type="NCBI Taxonomy" id="234621"/>
    <lineage>
        <taxon>Bacteria</taxon>
        <taxon>Bacillati</taxon>
        <taxon>Actinomycetota</taxon>
        <taxon>Actinomycetes</taxon>
        <taxon>Mycobacteriales</taxon>
        <taxon>Nocardiaceae</taxon>
        <taxon>Rhodococcus</taxon>
        <taxon>Rhodococcus erythropolis group</taxon>
    </lineage>
</organism>
<sequence>MATGTPAAELRELSEDELVTRLRESKEELFNLRFQMATGQMDNNRRLRTVRHEIARIYTVLRERELGLAVGPDAGDAA</sequence>
<gene>
    <name evidence="1" type="primary">rpmC</name>
    <name type="ordered locus">RER_18600</name>
</gene>
<dbReference type="EMBL" id="AP008957">
    <property type="protein sequence ID" value="BAH32568.1"/>
    <property type="molecule type" value="Genomic_DNA"/>
</dbReference>
<dbReference type="RefSeq" id="WP_003940734.1">
    <property type="nucleotide sequence ID" value="NC_012490.1"/>
</dbReference>
<dbReference type="SMR" id="C0ZW33"/>
<dbReference type="GeneID" id="93803296"/>
<dbReference type="KEGG" id="rer:RER_18600"/>
<dbReference type="eggNOG" id="COG0255">
    <property type="taxonomic scope" value="Bacteria"/>
</dbReference>
<dbReference type="HOGENOM" id="CLU_158491_3_3_11"/>
<dbReference type="Proteomes" id="UP000002204">
    <property type="component" value="Chromosome"/>
</dbReference>
<dbReference type="GO" id="GO:0022625">
    <property type="term" value="C:cytosolic large ribosomal subunit"/>
    <property type="evidence" value="ECO:0007669"/>
    <property type="project" value="TreeGrafter"/>
</dbReference>
<dbReference type="GO" id="GO:0003735">
    <property type="term" value="F:structural constituent of ribosome"/>
    <property type="evidence" value="ECO:0007669"/>
    <property type="project" value="InterPro"/>
</dbReference>
<dbReference type="GO" id="GO:0006412">
    <property type="term" value="P:translation"/>
    <property type="evidence" value="ECO:0007669"/>
    <property type="project" value="UniProtKB-UniRule"/>
</dbReference>
<dbReference type="CDD" id="cd00427">
    <property type="entry name" value="Ribosomal_L29_HIP"/>
    <property type="match status" value="1"/>
</dbReference>
<dbReference type="FunFam" id="1.10.287.310:FF:000001">
    <property type="entry name" value="50S ribosomal protein L29"/>
    <property type="match status" value="1"/>
</dbReference>
<dbReference type="Gene3D" id="1.10.287.310">
    <property type="match status" value="1"/>
</dbReference>
<dbReference type="HAMAP" id="MF_00374">
    <property type="entry name" value="Ribosomal_uL29"/>
    <property type="match status" value="1"/>
</dbReference>
<dbReference type="InterPro" id="IPR050063">
    <property type="entry name" value="Ribosomal_protein_uL29"/>
</dbReference>
<dbReference type="InterPro" id="IPR001854">
    <property type="entry name" value="Ribosomal_uL29"/>
</dbReference>
<dbReference type="InterPro" id="IPR018254">
    <property type="entry name" value="Ribosomal_uL29_CS"/>
</dbReference>
<dbReference type="InterPro" id="IPR036049">
    <property type="entry name" value="Ribosomal_uL29_sf"/>
</dbReference>
<dbReference type="NCBIfam" id="TIGR00012">
    <property type="entry name" value="L29"/>
    <property type="match status" value="1"/>
</dbReference>
<dbReference type="PANTHER" id="PTHR10916">
    <property type="entry name" value="60S RIBOSOMAL PROTEIN L35/50S RIBOSOMAL PROTEIN L29"/>
    <property type="match status" value="1"/>
</dbReference>
<dbReference type="PANTHER" id="PTHR10916:SF0">
    <property type="entry name" value="LARGE RIBOSOMAL SUBUNIT PROTEIN UL29C"/>
    <property type="match status" value="1"/>
</dbReference>
<dbReference type="Pfam" id="PF00831">
    <property type="entry name" value="Ribosomal_L29"/>
    <property type="match status" value="1"/>
</dbReference>
<dbReference type="SUPFAM" id="SSF46561">
    <property type="entry name" value="Ribosomal protein L29 (L29p)"/>
    <property type="match status" value="1"/>
</dbReference>
<dbReference type="PROSITE" id="PS00579">
    <property type="entry name" value="RIBOSOMAL_L29"/>
    <property type="match status" value="1"/>
</dbReference>
<comment type="similarity">
    <text evidence="1">Belongs to the universal ribosomal protein uL29 family.</text>
</comment>
<protein>
    <recommendedName>
        <fullName evidence="1">Large ribosomal subunit protein uL29</fullName>
    </recommendedName>
    <alternativeName>
        <fullName evidence="2">50S ribosomal protein L29</fullName>
    </alternativeName>
</protein>
<keyword id="KW-0687">Ribonucleoprotein</keyword>
<keyword id="KW-0689">Ribosomal protein</keyword>